<name>TDH_SHEON</name>
<accession>Q8E8J1</accession>
<comment type="function">
    <text evidence="1">Catalyzes the NAD(+)-dependent oxidation of L-threonine to 2-amino-3-ketobutyrate.</text>
</comment>
<comment type="catalytic activity">
    <reaction evidence="1">
        <text>L-threonine + NAD(+) = (2S)-2-amino-3-oxobutanoate + NADH + H(+)</text>
        <dbReference type="Rhea" id="RHEA:13161"/>
        <dbReference type="ChEBI" id="CHEBI:15378"/>
        <dbReference type="ChEBI" id="CHEBI:57540"/>
        <dbReference type="ChEBI" id="CHEBI:57926"/>
        <dbReference type="ChEBI" id="CHEBI:57945"/>
        <dbReference type="ChEBI" id="CHEBI:78948"/>
        <dbReference type="EC" id="1.1.1.103"/>
    </reaction>
</comment>
<comment type="cofactor">
    <cofactor evidence="1">
        <name>Zn(2+)</name>
        <dbReference type="ChEBI" id="CHEBI:29105"/>
    </cofactor>
    <text evidence="1">Binds 2 Zn(2+) ions per subunit.</text>
</comment>
<comment type="pathway">
    <text evidence="1">Amino-acid degradation; L-threonine degradation via oxydo-reductase pathway; glycine from L-threonine: step 1/2.</text>
</comment>
<comment type="subunit">
    <text evidence="1">Homotetramer.</text>
</comment>
<comment type="subcellular location">
    <subcellularLocation>
        <location evidence="1">Cytoplasm</location>
    </subcellularLocation>
</comment>
<comment type="similarity">
    <text evidence="1">Belongs to the zinc-containing alcohol dehydrogenase family.</text>
</comment>
<organism>
    <name type="scientific">Shewanella oneidensis (strain ATCC 700550 / JCM 31522 / CIP 106686 / LMG 19005 / NCIMB 14063 / MR-1)</name>
    <dbReference type="NCBI Taxonomy" id="211586"/>
    <lineage>
        <taxon>Bacteria</taxon>
        <taxon>Pseudomonadati</taxon>
        <taxon>Pseudomonadota</taxon>
        <taxon>Gammaproteobacteria</taxon>
        <taxon>Alteromonadales</taxon>
        <taxon>Shewanellaceae</taxon>
        <taxon>Shewanella</taxon>
    </lineage>
</organism>
<proteinExistence type="inferred from homology"/>
<dbReference type="EC" id="1.1.1.103" evidence="1"/>
<dbReference type="EMBL" id="AE014299">
    <property type="protein sequence ID" value="AAN57632.1"/>
    <property type="molecule type" value="Genomic_DNA"/>
</dbReference>
<dbReference type="RefSeq" id="NP_720188.1">
    <property type="nucleotide sequence ID" value="NC_004347.2"/>
</dbReference>
<dbReference type="RefSeq" id="WP_011074264.1">
    <property type="nucleotide sequence ID" value="NZ_CP053946.1"/>
</dbReference>
<dbReference type="SMR" id="Q8E8J1"/>
<dbReference type="STRING" id="211586.SO_4673"/>
<dbReference type="PaxDb" id="211586-SO_4673"/>
<dbReference type="KEGG" id="son:SO_4673"/>
<dbReference type="PATRIC" id="fig|211586.12.peg.4531"/>
<dbReference type="eggNOG" id="COG1063">
    <property type="taxonomic scope" value="Bacteria"/>
</dbReference>
<dbReference type="HOGENOM" id="CLU_026673_11_0_6"/>
<dbReference type="OrthoDB" id="9773078at2"/>
<dbReference type="PhylomeDB" id="Q8E8J1"/>
<dbReference type="BioCyc" id="SONE211586:G1GMP-4320-MONOMER"/>
<dbReference type="UniPathway" id="UPA00046">
    <property type="reaction ID" value="UER00505"/>
</dbReference>
<dbReference type="Proteomes" id="UP000008186">
    <property type="component" value="Chromosome"/>
</dbReference>
<dbReference type="GO" id="GO:0005737">
    <property type="term" value="C:cytoplasm"/>
    <property type="evidence" value="ECO:0007669"/>
    <property type="project" value="UniProtKB-SubCell"/>
</dbReference>
<dbReference type="GO" id="GO:0008743">
    <property type="term" value="F:L-threonine 3-dehydrogenase activity"/>
    <property type="evidence" value="ECO:0007669"/>
    <property type="project" value="UniProtKB-UniRule"/>
</dbReference>
<dbReference type="GO" id="GO:0008270">
    <property type="term" value="F:zinc ion binding"/>
    <property type="evidence" value="ECO:0007669"/>
    <property type="project" value="UniProtKB-UniRule"/>
</dbReference>
<dbReference type="GO" id="GO:0019518">
    <property type="term" value="P:L-threonine catabolic process to glycine"/>
    <property type="evidence" value="ECO:0007669"/>
    <property type="project" value="UniProtKB-UniPathway"/>
</dbReference>
<dbReference type="Gene3D" id="3.90.180.10">
    <property type="entry name" value="Medium-chain alcohol dehydrogenases, catalytic domain"/>
    <property type="match status" value="1"/>
</dbReference>
<dbReference type="Gene3D" id="3.40.50.720">
    <property type="entry name" value="NAD(P)-binding Rossmann-like Domain"/>
    <property type="match status" value="1"/>
</dbReference>
<dbReference type="HAMAP" id="MF_00627">
    <property type="entry name" value="Thr_dehydrog"/>
    <property type="match status" value="1"/>
</dbReference>
<dbReference type="InterPro" id="IPR013149">
    <property type="entry name" value="ADH-like_C"/>
</dbReference>
<dbReference type="InterPro" id="IPR013154">
    <property type="entry name" value="ADH-like_N"/>
</dbReference>
<dbReference type="InterPro" id="IPR002328">
    <property type="entry name" value="ADH_Zn_CS"/>
</dbReference>
<dbReference type="InterPro" id="IPR011032">
    <property type="entry name" value="GroES-like_sf"/>
</dbReference>
<dbReference type="InterPro" id="IPR004627">
    <property type="entry name" value="L-Threonine_3-DHase"/>
</dbReference>
<dbReference type="InterPro" id="IPR036291">
    <property type="entry name" value="NAD(P)-bd_dom_sf"/>
</dbReference>
<dbReference type="InterPro" id="IPR020843">
    <property type="entry name" value="PKS_ER"/>
</dbReference>
<dbReference type="InterPro" id="IPR050129">
    <property type="entry name" value="Zn_alcohol_dh"/>
</dbReference>
<dbReference type="NCBIfam" id="NF003808">
    <property type="entry name" value="PRK05396.1"/>
    <property type="match status" value="1"/>
</dbReference>
<dbReference type="NCBIfam" id="TIGR00692">
    <property type="entry name" value="tdh"/>
    <property type="match status" value="1"/>
</dbReference>
<dbReference type="PANTHER" id="PTHR43401">
    <property type="entry name" value="L-THREONINE 3-DEHYDROGENASE"/>
    <property type="match status" value="1"/>
</dbReference>
<dbReference type="PANTHER" id="PTHR43401:SF2">
    <property type="entry name" value="L-THREONINE 3-DEHYDROGENASE"/>
    <property type="match status" value="1"/>
</dbReference>
<dbReference type="Pfam" id="PF08240">
    <property type="entry name" value="ADH_N"/>
    <property type="match status" value="1"/>
</dbReference>
<dbReference type="Pfam" id="PF00107">
    <property type="entry name" value="ADH_zinc_N"/>
    <property type="match status" value="1"/>
</dbReference>
<dbReference type="SMART" id="SM00829">
    <property type="entry name" value="PKS_ER"/>
    <property type="match status" value="1"/>
</dbReference>
<dbReference type="SUPFAM" id="SSF50129">
    <property type="entry name" value="GroES-like"/>
    <property type="match status" value="1"/>
</dbReference>
<dbReference type="SUPFAM" id="SSF51735">
    <property type="entry name" value="NAD(P)-binding Rossmann-fold domains"/>
    <property type="match status" value="1"/>
</dbReference>
<dbReference type="PROSITE" id="PS00059">
    <property type="entry name" value="ADH_ZINC"/>
    <property type="match status" value="1"/>
</dbReference>
<keyword id="KW-0963">Cytoplasm</keyword>
<keyword id="KW-0479">Metal-binding</keyword>
<keyword id="KW-0520">NAD</keyword>
<keyword id="KW-0560">Oxidoreductase</keyword>
<keyword id="KW-1185">Reference proteome</keyword>
<keyword id="KW-0862">Zinc</keyword>
<protein>
    <recommendedName>
        <fullName evidence="1">L-threonine 3-dehydrogenase</fullName>
        <shortName evidence="1">TDH</shortName>
        <ecNumber evidence="1">1.1.1.103</ecNumber>
    </recommendedName>
</protein>
<sequence length="341" mass="37255">MKALSKLKAEKGIWLVDAPKPEMGHNDLLIKIKKTAICGTDMHIYNWDEWSQKTIPVPMVVGHEYVGEVVDIGQEVRGFNIGDRVSGEGHITCGHCRNCRAGRTHLCRNTSGVGVNREGSFAEYLVIPAFNAFKIPDDISDDLASIFDPFGNAVHTALSFDLVGEDVLITGAGPIGIMAAAVCRHVGARHVVITDVNEYRLELARKMGATRAVNVAQENLKDVMKELGMTEGFDVGLEMSGVPSAFRAMLDTMNHGGKIAMLGIPGGEMAIDWSKVIFKGLVIKGIYGREMFETWYKMASLIQSGLDISPIITHHYKIDDFQKGFDAMGSGQSGKVILSWD</sequence>
<reference key="1">
    <citation type="journal article" date="2002" name="Nat. Biotechnol.">
        <title>Genome sequence of the dissimilatory metal ion-reducing bacterium Shewanella oneidensis.</title>
        <authorList>
            <person name="Heidelberg J.F."/>
            <person name="Paulsen I.T."/>
            <person name="Nelson K.E."/>
            <person name="Gaidos E.J."/>
            <person name="Nelson W.C."/>
            <person name="Read T.D."/>
            <person name="Eisen J.A."/>
            <person name="Seshadri R."/>
            <person name="Ward N.L."/>
            <person name="Methe B.A."/>
            <person name="Clayton R.A."/>
            <person name="Meyer T."/>
            <person name="Tsapin A."/>
            <person name="Scott J."/>
            <person name="Beanan M.J."/>
            <person name="Brinkac L.M."/>
            <person name="Daugherty S.C."/>
            <person name="DeBoy R.T."/>
            <person name="Dodson R.J."/>
            <person name="Durkin A.S."/>
            <person name="Haft D.H."/>
            <person name="Kolonay J.F."/>
            <person name="Madupu R."/>
            <person name="Peterson J.D."/>
            <person name="Umayam L.A."/>
            <person name="White O."/>
            <person name="Wolf A.M."/>
            <person name="Vamathevan J.J."/>
            <person name="Weidman J.F."/>
            <person name="Impraim M."/>
            <person name="Lee K."/>
            <person name="Berry K.J."/>
            <person name="Lee C."/>
            <person name="Mueller J."/>
            <person name="Khouri H.M."/>
            <person name="Gill J."/>
            <person name="Utterback T.R."/>
            <person name="McDonald L.A."/>
            <person name="Feldblyum T.V."/>
            <person name="Smith H.O."/>
            <person name="Venter J.C."/>
            <person name="Nealson K.H."/>
            <person name="Fraser C.M."/>
        </authorList>
    </citation>
    <scope>NUCLEOTIDE SEQUENCE [LARGE SCALE GENOMIC DNA]</scope>
    <source>
        <strain>ATCC 700550 / JCM 31522 / CIP 106686 / LMG 19005 / NCIMB 14063 / MR-1</strain>
    </source>
</reference>
<gene>
    <name evidence="1" type="primary">tdh</name>
    <name type="ordered locus">SO_4673</name>
</gene>
<feature type="chain" id="PRO_0000160856" description="L-threonine 3-dehydrogenase">
    <location>
        <begin position="1"/>
        <end position="341"/>
    </location>
</feature>
<feature type="active site" description="Charge relay system" evidence="1">
    <location>
        <position position="40"/>
    </location>
</feature>
<feature type="active site" description="Charge relay system" evidence="1">
    <location>
        <position position="43"/>
    </location>
</feature>
<feature type="binding site" evidence="1">
    <location>
        <position position="38"/>
    </location>
    <ligand>
        <name>Zn(2+)</name>
        <dbReference type="ChEBI" id="CHEBI:29105"/>
        <label>1</label>
        <note>catalytic</note>
    </ligand>
</feature>
<feature type="binding site" evidence="1">
    <location>
        <position position="63"/>
    </location>
    <ligand>
        <name>Zn(2+)</name>
        <dbReference type="ChEBI" id="CHEBI:29105"/>
        <label>1</label>
        <note>catalytic</note>
    </ligand>
</feature>
<feature type="binding site" evidence="1">
    <location>
        <position position="64"/>
    </location>
    <ligand>
        <name>Zn(2+)</name>
        <dbReference type="ChEBI" id="CHEBI:29105"/>
        <label>1</label>
        <note>catalytic</note>
    </ligand>
</feature>
<feature type="binding site" evidence="1">
    <location>
        <position position="93"/>
    </location>
    <ligand>
        <name>Zn(2+)</name>
        <dbReference type="ChEBI" id="CHEBI:29105"/>
        <label>2</label>
    </ligand>
</feature>
<feature type="binding site" evidence="1">
    <location>
        <position position="96"/>
    </location>
    <ligand>
        <name>Zn(2+)</name>
        <dbReference type="ChEBI" id="CHEBI:29105"/>
        <label>2</label>
    </ligand>
</feature>
<feature type="binding site" evidence="1">
    <location>
        <position position="99"/>
    </location>
    <ligand>
        <name>Zn(2+)</name>
        <dbReference type="ChEBI" id="CHEBI:29105"/>
        <label>2</label>
    </ligand>
</feature>
<feature type="binding site" evidence="1">
    <location>
        <position position="107"/>
    </location>
    <ligand>
        <name>Zn(2+)</name>
        <dbReference type="ChEBI" id="CHEBI:29105"/>
        <label>2</label>
    </ligand>
</feature>
<feature type="binding site" evidence="1">
    <location>
        <position position="175"/>
    </location>
    <ligand>
        <name>NAD(+)</name>
        <dbReference type="ChEBI" id="CHEBI:57540"/>
    </ligand>
</feature>
<feature type="binding site" evidence="1">
    <location>
        <position position="195"/>
    </location>
    <ligand>
        <name>NAD(+)</name>
        <dbReference type="ChEBI" id="CHEBI:57540"/>
    </ligand>
</feature>
<feature type="binding site" evidence="1">
    <location>
        <position position="200"/>
    </location>
    <ligand>
        <name>NAD(+)</name>
        <dbReference type="ChEBI" id="CHEBI:57540"/>
    </ligand>
</feature>
<feature type="binding site" evidence="1">
    <location>
        <begin position="262"/>
        <end position="264"/>
    </location>
    <ligand>
        <name>NAD(+)</name>
        <dbReference type="ChEBI" id="CHEBI:57540"/>
    </ligand>
</feature>
<feature type="binding site" evidence="1">
    <location>
        <begin position="286"/>
        <end position="287"/>
    </location>
    <ligand>
        <name>NAD(+)</name>
        <dbReference type="ChEBI" id="CHEBI:57540"/>
    </ligand>
</feature>
<feature type="site" description="Important for catalytic activity for the proton relay mechanism but does not participate directly in the coordination of zinc atom" evidence="1">
    <location>
        <position position="148"/>
    </location>
</feature>
<evidence type="ECO:0000255" key="1">
    <source>
        <dbReference type="HAMAP-Rule" id="MF_00627"/>
    </source>
</evidence>